<accession>P17401</accession>
<feature type="chain" id="PRO_0000222373" description="Protein X">
    <location>
        <begin position="1"/>
        <end position="141"/>
    </location>
</feature>
<feature type="region of interest" description="Disordered" evidence="2">
    <location>
        <begin position="25"/>
        <end position="52"/>
    </location>
</feature>
<feature type="region of interest" description="Mitochondrial targeting sequence" evidence="1">
    <location>
        <begin position="68"/>
        <end position="113"/>
    </location>
</feature>
<feature type="compositionally biased region" description="Low complexity" evidence="2">
    <location>
        <begin position="25"/>
        <end position="48"/>
    </location>
</feature>
<protein>
    <recommendedName>
        <fullName evidence="1">Protein X</fullName>
    </recommendedName>
    <alternativeName>
        <fullName evidence="1">HBx</fullName>
    </alternativeName>
    <alternativeName>
        <fullName evidence="1">Peptide X</fullName>
    </alternativeName>
    <alternativeName>
        <fullName evidence="1">pX</fullName>
    </alternativeName>
</protein>
<keyword id="KW-1074">Activation of host NF-kappa-B by virus</keyword>
<keyword id="KW-0010">Activator</keyword>
<keyword id="KW-0053">Apoptosis</keyword>
<keyword id="KW-1035">Host cytoplasm</keyword>
<keyword id="KW-1079">Host G2/M cell cycle arrest by virus</keyword>
<keyword id="KW-1045">Host mitochondrion</keyword>
<keyword id="KW-1048">Host nucleus</keyword>
<keyword id="KW-0945">Host-virus interaction</keyword>
<keyword id="KW-1121">Modulation of host cell cycle by virus</keyword>
<keyword id="KW-1185">Reference proteome</keyword>
<keyword id="KW-0804">Transcription</keyword>
<keyword id="KW-0805">Transcription regulation</keyword>
<gene>
    <name evidence="1" type="primary">X</name>
</gene>
<sequence length="141" mass="15227">MAARLCCHLDSARDVLLLRPFGPQSSGPSFPRPAAGSAASSASSPSPSDESDLPLGRLPACFASASGPCCLVFTCADLRTMDSTVNFVSWHANRQLGMPSKDLWTPYIKDQLLTKWEEGSIDPRLSIFVLGGCRHKCMRLL</sequence>
<dbReference type="EMBL" id="J04514">
    <property type="protein sequence ID" value="AAA46771.1"/>
    <property type="molecule type" value="Genomic_DNA"/>
</dbReference>
<dbReference type="PIR" id="D32397">
    <property type="entry name" value="QQVLW8"/>
</dbReference>
<dbReference type="Proteomes" id="UP000000287">
    <property type="component" value="Genome"/>
</dbReference>
<dbReference type="GO" id="GO:0033650">
    <property type="term" value="C:host cell mitochondrion"/>
    <property type="evidence" value="ECO:0007669"/>
    <property type="project" value="UniProtKB-SubCell"/>
</dbReference>
<dbReference type="GO" id="GO:0042025">
    <property type="term" value="C:host cell nucleus"/>
    <property type="evidence" value="ECO:0007669"/>
    <property type="project" value="UniProtKB-SubCell"/>
</dbReference>
<dbReference type="GO" id="GO:0006351">
    <property type="term" value="P:DNA-templated transcription"/>
    <property type="evidence" value="ECO:0007669"/>
    <property type="project" value="UniProtKB-UniRule"/>
</dbReference>
<dbReference type="GO" id="GO:0085033">
    <property type="term" value="P:symbiont-mediated activation of host NF-kappaB cascade"/>
    <property type="evidence" value="ECO:0007669"/>
    <property type="project" value="UniProtKB-UniRule"/>
</dbReference>
<dbReference type="GO" id="GO:0039592">
    <property type="term" value="P:symbiont-mediated arrest of host cell cycle during G2/M transition"/>
    <property type="evidence" value="ECO:0007669"/>
    <property type="project" value="UniProtKB-UniRule"/>
</dbReference>
<dbReference type="GO" id="GO:0019079">
    <property type="term" value="P:viral genome replication"/>
    <property type="evidence" value="ECO:0007669"/>
    <property type="project" value="UniProtKB-UniRule"/>
</dbReference>
<dbReference type="HAMAP" id="MF_04074">
    <property type="entry name" value="HBV_X"/>
    <property type="match status" value="1"/>
</dbReference>
<dbReference type="InterPro" id="IPR000236">
    <property type="entry name" value="Transactivation_prot_X"/>
</dbReference>
<dbReference type="Pfam" id="PF00739">
    <property type="entry name" value="X"/>
    <property type="match status" value="1"/>
</dbReference>
<organismHost>
    <name type="scientific">Marmota monax</name>
    <name type="common">Woodchuck</name>
    <dbReference type="NCBI Taxonomy" id="9995"/>
</organismHost>
<reference key="1">
    <citation type="journal article" date="1989" name="Proc. Natl. Acad. Sci. U.S.A.">
        <title>Complete nucleotide sequence of a molecular clone of woodchuck hepatitis virus that is infectious in the natural host.</title>
        <authorList>
            <person name="Girones R."/>
            <person name="Cote P.J."/>
            <person name="Hornbuckle W.E."/>
            <person name="Tennant B.C."/>
            <person name="Gerin J.L."/>
            <person name="Purcell R.H."/>
            <person name="Miller R.H."/>
        </authorList>
    </citation>
    <scope>NUCLEOTIDE SEQUENCE [GENOMIC DNA]</scope>
    <source>
        <strain>Isolate infectious clone</strain>
    </source>
</reference>
<name>X_WHV5</name>
<organism>
    <name type="scientific">Woodchuck hepatitis B virus (isolate 8)</name>
    <name type="common">WHV</name>
    <dbReference type="NCBI Taxonomy" id="10433"/>
    <lineage>
        <taxon>Viruses</taxon>
        <taxon>Riboviria</taxon>
        <taxon>Pararnavirae</taxon>
        <taxon>Artverviricota</taxon>
        <taxon>Revtraviricetes</taxon>
        <taxon>Blubervirales</taxon>
        <taxon>Hepadnaviridae</taxon>
        <taxon>Orthohepadnavirus</taxon>
        <taxon>Woodchuck hepatitis virus</taxon>
    </lineage>
</organism>
<evidence type="ECO:0000255" key="1">
    <source>
        <dbReference type="HAMAP-Rule" id="MF_04074"/>
    </source>
</evidence>
<evidence type="ECO:0000256" key="2">
    <source>
        <dbReference type="SAM" id="MobiDB-lite"/>
    </source>
</evidence>
<comment type="function">
    <text evidence="1">Multifunctional protein that plays a role in silencing host antiviral defenses and promoting viral transcription. Does not seem to be essential for HBV infection. May be directly involved in development of cirrhosis and liver cancer (hepatocellular carcinoma). Most of cytosolic activities involve modulation of cytosolic calcium. The effect on apoptosis is controversial depending on the cell types in which the studies have been conducted. May induce apoptosis by localizing in mitochondria and causing loss of mitochondrial membrane potential. May also modulate apoptosis by binding host CFLAR, a key regulator of the death-inducing signaling complex (DISC). Promotes viral transcription by using the host E3 ubiquitin ligase DDB1 to target the SMC5-SMC6 complex to proteasomal degradation. This host complex would otherwise bind to viral episomal DNA, and prevents its transcription. Moderately stimulates transcription of many different viral and cellular transcription elements. Promoters and enhancers stimulated by HBx contain DNA binding sites for NF-kappa-B, AP-1, AP-2, c-EBP, ATF/CREB, or the calcium-activated factor NF-AT.</text>
</comment>
<comment type="subunit">
    <text evidence="1">May form homodimer. May interact with host CEBPA, CFLAR, CREB1, DDB1, E4F1, HBXIP, HSPD1/HSP60, NFKBIA, POLR2E and SMAD4. Interacts with host SMC5-SMC6 complex and induces its degradation. Interacts with host TRPC4AP; leading to prevent ubiquitination of TRPC4AP. Interacts with host PLSCR1; this interaction promotes ubiquitination and degradation of HBx and impairs HBx-mediated cell proliferation.</text>
</comment>
<comment type="subcellular location">
    <subcellularLocation>
        <location evidence="1">Host cytoplasm</location>
    </subcellularLocation>
    <subcellularLocation>
        <location evidence="1">Host nucleus</location>
    </subcellularLocation>
    <subcellularLocation>
        <location evidence="1">Host mitochondrion</location>
    </subcellularLocation>
    <text evidence="1">Mainly cytoplasmic as only a fraction is detected in the nucleus. In cytoplasm, a minor fraction associates with mitochondria or proteasomes.</text>
</comment>
<comment type="PTM">
    <text evidence="1">A fraction may be phosphorylated in insect cells and HepG2 cells, a human hepatoblastoma cell line. Phosphorylated in vitro by host protein kinase C or mitogen-activated protein kinase. N-acetylated in insect cells.</text>
</comment>
<comment type="similarity">
    <text evidence="1">Belongs to the orthohepadnavirus protein X family.</text>
</comment>
<proteinExistence type="inferred from homology"/>